<feature type="chain" id="PRO_0000389773" description="Acetyl-coenzyme A carboxylase carboxyl transferase subunit beta">
    <location>
        <begin position="1"/>
        <end position="283"/>
    </location>
</feature>
<feature type="domain" description="CoA carboxyltransferase N-terminal" evidence="2">
    <location>
        <begin position="29"/>
        <end position="283"/>
    </location>
</feature>
<feature type="zinc finger region" description="C4-type" evidence="1">
    <location>
        <begin position="33"/>
        <end position="54"/>
    </location>
</feature>
<feature type="binding site" evidence="1">
    <location>
        <position position="33"/>
    </location>
    <ligand>
        <name>Zn(2+)</name>
        <dbReference type="ChEBI" id="CHEBI:29105"/>
    </ligand>
</feature>
<feature type="binding site" evidence="1">
    <location>
        <position position="36"/>
    </location>
    <ligand>
        <name>Zn(2+)</name>
        <dbReference type="ChEBI" id="CHEBI:29105"/>
    </ligand>
</feature>
<feature type="binding site" evidence="1">
    <location>
        <position position="51"/>
    </location>
    <ligand>
        <name>Zn(2+)</name>
        <dbReference type="ChEBI" id="CHEBI:29105"/>
    </ligand>
</feature>
<feature type="binding site" evidence="1">
    <location>
        <position position="54"/>
    </location>
    <ligand>
        <name>Zn(2+)</name>
        <dbReference type="ChEBI" id="CHEBI:29105"/>
    </ligand>
</feature>
<keyword id="KW-0067">ATP-binding</keyword>
<keyword id="KW-0963">Cytoplasm</keyword>
<keyword id="KW-0275">Fatty acid biosynthesis</keyword>
<keyword id="KW-0276">Fatty acid metabolism</keyword>
<keyword id="KW-0444">Lipid biosynthesis</keyword>
<keyword id="KW-0443">Lipid metabolism</keyword>
<keyword id="KW-0479">Metal-binding</keyword>
<keyword id="KW-0547">Nucleotide-binding</keyword>
<keyword id="KW-1185">Reference proteome</keyword>
<keyword id="KW-0808">Transferase</keyword>
<keyword id="KW-0862">Zinc</keyword>
<keyword id="KW-0863">Zinc-finger</keyword>
<organism>
    <name type="scientific">Latilactobacillus sakei subsp. sakei (strain 23K)</name>
    <name type="common">Lactobacillus sakei subsp. sakei</name>
    <dbReference type="NCBI Taxonomy" id="314315"/>
    <lineage>
        <taxon>Bacteria</taxon>
        <taxon>Bacillati</taxon>
        <taxon>Bacillota</taxon>
        <taxon>Bacilli</taxon>
        <taxon>Lactobacillales</taxon>
        <taxon>Lactobacillaceae</taxon>
        <taxon>Latilactobacillus</taxon>
    </lineage>
</organism>
<sequence length="283" mass="31426">MQLFNAVRNIGKAHLKYNQEARQKVPDGLWVACPKCQQSIYHKDLGYYRTCPVCQYGFRTRAKVRLDWLVDSFEPAGDLAQTPNPLHFPKYPQKLRKAQQITGLEDSILTGVATIKQQKFALGIMDPYFIMGSMGSATGEKITRLFELATEKGLPVILIAASGGARMQEGIFSLMQMAKTSAAVKQHAEQGLLYISLLTDPTTGGVTASFATEADIILAEPKAVIGFAGRRVIEQTMHEQIAPDLQDAETVLKNGFIDQIVARQDQKKVLHQLLKLHERGAHY</sequence>
<proteinExistence type="inferred from homology"/>
<reference key="1">
    <citation type="journal article" date="2005" name="Nat. Biotechnol.">
        <title>The complete genome sequence of the meat-borne lactic acid bacterium Lactobacillus sakei 23K.</title>
        <authorList>
            <person name="Chaillou S."/>
            <person name="Champomier-Verges M.-C."/>
            <person name="Cornet M."/>
            <person name="Crutz-Le Coq A.-M."/>
            <person name="Dudez A.-M."/>
            <person name="Martin V."/>
            <person name="Beaufils S."/>
            <person name="Darbon-Rongere E."/>
            <person name="Bossy R."/>
            <person name="Loux V."/>
            <person name="Zagorec M."/>
        </authorList>
    </citation>
    <scope>NUCLEOTIDE SEQUENCE [LARGE SCALE GENOMIC DNA]</scope>
    <source>
        <strain>23K</strain>
    </source>
</reference>
<protein>
    <recommendedName>
        <fullName evidence="1">Acetyl-coenzyme A carboxylase carboxyl transferase subunit beta</fullName>
        <shortName evidence="1">ACCase subunit beta</shortName>
        <shortName evidence="1">Acetyl-CoA carboxylase carboxyltransferase subunit beta</shortName>
        <ecNumber evidence="1">2.1.3.15</ecNumber>
    </recommendedName>
</protein>
<dbReference type="EC" id="2.1.3.15" evidence="1"/>
<dbReference type="EMBL" id="CR936503">
    <property type="protein sequence ID" value="CAI55125.1"/>
    <property type="molecule type" value="Genomic_DNA"/>
</dbReference>
<dbReference type="RefSeq" id="WP_011374527.1">
    <property type="nucleotide sequence ID" value="NC_007576.1"/>
</dbReference>
<dbReference type="SMR" id="Q38XF6"/>
<dbReference type="STRING" id="314315.LCA_0821"/>
<dbReference type="KEGG" id="lsa:LCA_0821"/>
<dbReference type="eggNOG" id="COG0777">
    <property type="taxonomic scope" value="Bacteria"/>
</dbReference>
<dbReference type="HOGENOM" id="CLU_015486_1_1_9"/>
<dbReference type="OrthoDB" id="9772975at2"/>
<dbReference type="UniPathway" id="UPA00655">
    <property type="reaction ID" value="UER00711"/>
</dbReference>
<dbReference type="Proteomes" id="UP000002707">
    <property type="component" value="Chromosome"/>
</dbReference>
<dbReference type="GO" id="GO:0009317">
    <property type="term" value="C:acetyl-CoA carboxylase complex"/>
    <property type="evidence" value="ECO:0007669"/>
    <property type="project" value="InterPro"/>
</dbReference>
<dbReference type="GO" id="GO:0003989">
    <property type="term" value="F:acetyl-CoA carboxylase activity"/>
    <property type="evidence" value="ECO:0007669"/>
    <property type="project" value="InterPro"/>
</dbReference>
<dbReference type="GO" id="GO:0005524">
    <property type="term" value="F:ATP binding"/>
    <property type="evidence" value="ECO:0007669"/>
    <property type="project" value="UniProtKB-KW"/>
</dbReference>
<dbReference type="GO" id="GO:0016743">
    <property type="term" value="F:carboxyl- or carbamoyltransferase activity"/>
    <property type="evidence" value="ECO:0007669"/>
    <property type="project" value="UniProtKB-UniRule"/>
</dbReference>
<dbReference type="GO" id="GO:0008270">
    <property type="term" value="F:zinc ion binding"/>
    <property type="evidence" value="ECO:0007669"/>
    <property type="project" value="UniProtKB-UniRule"/>
</dbReference>
<dbReference type="GO" id="GO:0006633">
    <property type="term" value="P:fatty acid biosynthetic process"/>
    <property type="evidence" value="ECO:0007669"/>
    <property type="project" value="UniProtKB-KW"/>
</dbReference>
<dbReference type="GO" id="GO:2001295">
    <property type="term" value="P:malonyl-CoA biosynthetic process"/>
    <property type="evidence" value="ECO:0007669"/>
    <property type="project" value="UniProtKB-UniRule"/>
</dbReference>
<dbReference type="Gene3D" id="3.90.226.10">
    <property type="entry name" value="2-enoyl-CoA Hydratase, Chain A, domain 1"/>
    <property type="match status" value="1"/>
</dbReference>
<dbReference type="HAMAP" id="MF_01395">
    <property type="entry name" value="AcetylCoA_CT_beta"/>
    <property type="match status" value="1"/>
</dbReference>
<dbReference type="InterPro" id="IPR034733">
    <property type="entry name" value="AcCoA_carboxyl_beta"/>
</dbReference>
<dbReference type="InterPro" id="IPR000438">
    <property type="entry name" value="Acetyl_CoA_COase_Trfase_b_su"/>
</dbReference>
<dbReference type="InterPro" id="IPR029045">
    <property type="entry name" value="ClpP/crotonase-like_dom_sf"/>
</dbReference>
<dbReference type="InterPro" id="IPR011762">
    <property type="entry name" value="COA_CT_N"/>
</dbReference>
<dbReference type="PANTHER" id="PTHR42995">
    <property type="entry name" value="ACETYL-COENZYME A CARBOXYLASE CARBOXYL TRANSFERASE SUBUNIT BETA, CHLOROPLASTIC"/>
    <property type="match status" value="1"/>
</dbReference>
<dbReference type="PANTHER" id="PTHR42995:SF5">
    <property type="entry name" value="ACETYL-COENZYME A CARBOXYLASE CARBOXYL TRANSFERASE SUBUNIT BETA, CHLOROPLASTIC"/>
    <property type="match status" value="1"/>
</dbReference>
<dbReference type="Pfam" id="PF01039">
    <property type="entry name" value="Carboxyl_trans"/>
    <property type="match status" value="1"/>
</dbReference>
<dbReference type="PRINTS" id="PR01070">
    <property type="entry name" value="ACCCTRFRASEB"/>
</dbReference>
<dbReference type="SUPFAM" id="SSF52096">
    <property type="entry name" value="ClpP/crotonase"/>
    <property type="match status" value="1"/>
</dbReference>
<dbReference type="PROSITE" id="PS50980">
    <property type="entry name" value="COA_CT_NTER"/>
    <property type="match status" value="1"/>
</dbReference>
<evidence type="ECO:0000255" key="1">
    <source>
        <dbReference type="HAMAP-Rule" id="MF_01395"/>
    </source>
</evidence>
<evidence type="ECO:0000255" key="2">
    <source>
        <dbReference type="PROSITE-ProRule" id="PRU01136"/>
    </source>
</evidence>
<comment type="function">
    <text evidence="1">Component of the acetyl coenzyme A carboxylase (ACC) complex. Biotin carboxylase (BC) catalyzes the carboxylation of biotin on its carrier protein (BCCP) and then the CO(2) group is transferred by the transcarboxylase to acetyl-CoA to form malonyl-CoA.</text>
</comment>
<comment type="catalytic activity">
    <reaction evidence="1">
        <text>N(6)-carboxybiotinyl-L-lysyl-[protein] + acetyl-CoA = N(6)-biotinyl-L-lysyl-[protein] + malonyl-CoA</text>
        <dbReference type="Rhea" id="RHEA:54728"/>
        <dbReference type="Rhea" id="RHEA-COMP:10505"/>
        <dbReference type="Rhea" id="RHEA-COMP:10506"/>
        <dbReference type="ChEBI" id="CHEBI:57288"/>
        <dbReference type="ChEBI" id="CHEBI:57384"/>
        <dbReference type="ChEBI" id="CHEBI:83144"/>
        <dbReference type="ChEBI" id="CHEBI:83145"/>
        <dbReference type="EC" id="2.1.3.15"/>
    </reaction>
</comment>
<comment type="cofactor">
    <cofactor evidence="1">
        <name>Zn(2+)</name>
        <dbReference type="ChEBI" id="CHEBI:29105"/>
    </cofactor>
    <text evidence="1">Binds 1 zinc ion per subunit.</text>
</comment>
<comment type="pathway">
    <text evidence="1">Lipid metabolism; malonyl-CoA biosynthesis; malonyl-CoA from acetyl-CoA: step 1/1.</text>
</comment>
<comment type="subunit">
    <text evidence="1">Acetyl-CoA carboxylase is a heterohexamer composed of biotin carboxyl carrier protein (AccB), biotin carboxylase (AccC) and two subunits each of ACCase subunit alpha (AccA) and ACCase subunit beta (AccD).</text>
</comment>
<comment type="subcellular location">
    <subcellularLocation>
        <location evidence="1">Cytoplasm</location>
    </subcellularLocation>
</comment>
<comment type="similarity">
    <text evidence="1">Belongs to the AccD/PCCB family.</text>
</comment>
<gene>
    <name evidence="1" type="primary">accD</name>
    <name type="ordered locus">LCA_0821</name>
    <name type="ordered locus">LSA0821</name>
</gene>
<accession>Q38XF6</accession>
<name>ACCD_LATSS</name>